<comment type="subcellular location">
    <subcellularLocation>
        <location evidence="1">Cell membrane</location>
        <topology evidence="1">Multi-pass membrane protein</topology>
    </subcellularLocation>
</comment>
<comment type="similarity">
    <text evidence="1">Belongs to the UPF0353 family.</text>
</comment>
<protein>
    <recommendedName>
        <fullName evidence="1">UPF0353 protein Mmcs_2455</fullName>
    </recommendedName>
</protein>
<reference key="1">
    <citation type="submission" date="2006-06" db="EMBL/GenBank/DDBJ databases">
        <title>Complete sequence of chromosome of Mycobacterium sp. MCS.</title>
        <authorList>
            <consortium name="US DOE Joint Genome Institute"/>
            <person name="Copeland A."/>
            <person name="Lucas S."/>
            <person name="Lapidus A."/>
            <person name="Barry K."/>
            <person name="Detter J.C."/>
            <person name="Glavina del Rio T."/>
            <person name="Hammon N."/>
            <person name="Israni S."/>
            <person name="Dalin E."/>
            <person name="Tice H."/>
            <person name="Pitluck S."/>
            <person name="Martinez M."/>
            <person name="Schmutz J."/>
            <person name="Larimer F."/>
            <person name="Land M."/>
            <person name="Hauser L."/>
            <person name="Kyrpides N."/>
            <person name="Kim E."/>
            <person name="Miller C.D."/>
            <person name="Hughes J.E."/>
            <person name="Anderson A.J."/>
            <person name="Sims R.C."/>
            <person name="Richardson P."/>
        </authorList>
    </citation>
    <scope>NUCLEOTIDE SEQUENCE [LARGE SCALE GENOMIC DNA]</scope>
    <source>
        <strain>MCS</strain>
    </source>
</reference>
<gene>
    <name type="ordered locus">Mmcs_2455</name>
</gene>
<name>Y2455_MYCSS</name>
<sequence length="335" mass="35950">MTLPLLGPMSFSGFEHPWFFLFLIVVLALAGLYVIVALARQRRILRFANMELLESVAPNRPNRWRHLPAILLVASLVLLTVAMAGPTRDVRVPRNRAVVMLVIDVSQSMRATDVSPSRLAAAQEASKQFADELTPGINLGLIAYAGTATVLVSPTTNREATKTAIDKLQLADRTATGEGIFTALQAIATVGAVIGGGDEPPPARIVLFSDGKETVPSNPDNPKGAFTAARTAKDQGVPISTISFGTPYGYVEINEQRQPVPVDDQMLKKIADLSEGEAFTASSLEQLREVYANLQQQIGYETIKGDASVGWLRLGALVLALSALAALLLNRRLPG</sequence>
<organism>
    <name type="scientific">Mycobacterium sp. (strain MCS)</name>
    <dbReference type="NCBI Taxonomy" id="164756"/>
    <lineage>
        <taxon>Bacteria</taxon>
        <taxon>Bacillati</taxon>
        <taxon>Actinomycetota</taxon>
        <taxon>Actinomycetes</taxon>
        <taxon>Mycobacteriales</taxon>
        <taxon>Mycobacteriaceae</taxon>
        <taxon>Mycobacterium</taxon>
    </lineage>
</organism>
<feature type="chain" id="PRO_1000067655" description="UPF0353 protein Mmcs_2455">
    <location>
        <begin position="1"/>
        <end position="335"/>
    </location>
</feature>
<feature type="transmembrane region" description="Helical" evidence="1">
    <location>
        <begin position="18"/>
        <end position="38"/>
    </location>
</feature>
<feature type="transmembrane region" description="Helical" evidence="1">
    <location>
        <begin position="67"/>
        <end position="87"/>
    </location>
</feature>
<feature type="transmembrane region" description="Helical" evidence="1">
    <location>
        <begin position="309"/>
        <end position="329"/>
    </location>
</feature>
<feature type="domain" description="VWFA" evidence="1">
    <location>
        <begin position="98"/>
        <end position="294"/>
    </location>
</feature>
<proteinExistence type="inferred from homology"/>
<keyword id="KW-1003">Cell membrane</keyword>
<keyword id="KW-0472">Membrane</keyword>
<keyword id="KW-0812">Transmembrane</keyword>
<keyword id="KW-1133">Transmembrane helix</keyword>
<dbReference type="EMBL" id="CP000384">
    <property type="protein sequence ID" value="ABG08563.1"/>
    <property type="molecule type" value="Genomic_DNA"/>
</dbReference>
<dbReference type="SMR" id="Q1B971"/>
<dbReference type="KEGG" id="mmc:Mmcs_2455"/>
<dbReference type="HOGENOM" id="CLU_024570_2_0_11"/>
<dbReference type="BioCyc" id="MSP164756:G1G6O-2506-MONOMER"/>
<dbReference type="GO" id="GO:0005886">
    <property type="term" value="C:plasma membrane"/>
    <property type="evidence" value="ECO:0007669"/>
    <property type="project" value="UniProtKB-SubCell"/>
</dbReference>
<dbReference type="Gene3D" id="3.40.50.410">
    <property type="entry name" value="von Willebrand factor, type A domain"/>
    <property type="match status" value="1"/>
</dbReference>
<dbReference type="HAMAP" id="MF_01340">
    <property type="entry name" value="UPF0353"/>
    <property type="match status" value="1"/>
</dbReference>
<dbReference type="InterPro" id="IPR024163">
    <property type="entry name" value="Aerotolerance_reg_N"/>
</dbReference>
<dbReference type="InterPro" id="IPR022933">
    <property type="entry name" value="UPF0353"/>
</dbReference>
<dbReference type="InterPro" id="IPR050768">
    <property type="entry name" value="UPF0353/GerABKA_families"/>
</dbReference>
<dbReference type="InterPro" id="IPR002035">
    <property type="entry name" value="VWF_A"/>
</dbReference>
<dbReference type="InterPro" id="IPR036465">
    <property type="entry name" value="vWFA_dom_sf"/>
</dbReference>
<dbReference type="NCBIfam" id="NF010238">
    <property type="entry name" value="PRK13685.1"/>
    <property type="match status" value="1"/>
</dbReference>
<dbReference type="PANTHER" id="PTHR22550:SF5">
    <property type="entry name" value="LEUCINE ZIPPER PROTEIN 4"/>
    <property type="match status" value="1"/>
</dbReference>
<dbReference type="PANTHER" id="PTHR22550">
    <property type="entry name" value="SPORE GERMINATION PROTEIN"/>
    <property type="match status" value="1"/>
</dbReference>
<dbReference type="Pfam" id="PF07584">
    <property type="entry name" value="BatA"/>
    <property type="match status" value="1"/>
</dbReference>
<dbReference type="Pfam" id="PF13519">
    <property type="entry name" value="VWA_2"/>
    <property type="match status" value="1"/>
</dbReference>
<dbReference type="SMART" id="SM00327">
    <property type="entry name" value="VWA"/>
    <property type="match status" value="1"/>
</dbReference>
<dbReference type="SUPFAM" id="SSF53300">
    <property type="entry name" value="vWA-like"/>
    <property type="match status" value="1"/>
</dbReference>
<dbReference type="PROSITE" id="PS50234">
    <property type="entry name" value="VWFA"/>
    <property type="match status" value="1"/>
</dbReference>
<accession>Q1B971</accession>
<evidence type="ECO:0000255" key="1">
    <source>
        <dbReference type="HAMAP-Rule" id="MF_01340"/>
    </source>
</evidence>